<protein>
    <recommendedName>
        <fullName>Beta-mannosidase A</fullName>
        <ecNumber>3.2.1.25</ecNumber>
    </recommendedName>
    <alternativeName>
        <fullName>Mannanase A</fullName>
        <shortName>Mannase A</shortName>
    </alternativeName>
</protein>
<reference key="1">
    <citation type="journal article" date="2008" name="PLoS Genet.">
        <title>Genomic islands in the pathogenic filamentous fungus Aspergillus fumigatus.</title>
        <authorList>
            <person name="Fedorova N.D."/>
            <person name="Khaldi N."/>
            <person name="Joardar V.S."/>
            <person name="Maiti R."/>
            <person name="Amedeo P."/>
            <person name="Anderson M.J."/>
            <person name="Crabtree J."/>
            <person name="Silva J.C."/>
            <person name="Badger J.H."/>
            <person name="Albarraq A."/>
            <person name="Angiuoli S."/>
            <person name="Bussey H."/>
            <person name="Bowyer P."/>
            <person name="Cotty P.J."/>
            <person name="Dyer P.S."/>
            <person name="Egan A."/>
            <person name="Galens K."/>
            <person name="Fraser-Liggett C.M."/>
            <person name="Haas B.J."/>
            <person name="Inman J.M."/>
            <person name="Kent R."/>
            <person name="Lemieux S."/>
            <person name="Malavazi I."/>
            <person name="Orvis J."/>
            <person name="Roemer T."/>
            <person name="Ronning C.M."/>
            <person name="Sundaram J.P."/>
            <person name="Sutton G."/>
            <person name="Turner G."/>
            <person name="Venter J.C."/>
            <person name="White O.R."/>
            <person name="Whitty B.R."/>
            <person name="Youngman P."/>
            <person name="Wolfe K.H."/>
            <person name="Goldman G.H."/>
            <person name="Wortman J.R."/>
            <person name="Jiang B."/>
            <person name="Denning D.W."/>
            <person name="Nierman W.C."/>
        </authorList>
    </citation>
    <scope>NUCLEOTIDE SEQUENCE [LARGE SCALE GENOMIC DNA]</scope>
    <source>
        <strain>CBS 144.89 / FGSC A1163 / CEA10</strain>
    </source>
</reference>
<dbReference type="EC" id="3.2.1.25"/>
<dbReference type="EMBL" id="DS499599">
    <property type="protein sequence ID" value="EDP49453.1"/>
    <property type="molecule type" value="Genomic_DNA"/>
</dbReference>
<dbReference type="SMR" id="B0Y7S2"/>
<dbReference type="GlyCosmos" id="B0Y7S2">
    <property type="glycosylation" value="15 sites, No reported glycans"/>
</dbReference>
<dbReference type="EnsemblFungi" id="EDP49453">
    <property type="protein sequence ID" value="EDP49453"/>
    <property type="gene ID" value="AFUB_074800"/>
</dbReference>
<dbReference type="VEuPathDB" id="FungiDB:AFUB_074800"/>
<dbReference type="HOGENOM" id="CLU_005015_3_0_1"/>
<dbReference type="OrthoDB" id="77005at5052"/>
<dbReference type="PhylomeDB" id="B0Y7S2"/>
<dbReference type="UniPathway" id="UPA00280"/>
<dbReference type="Proteomes" id="UP000001699">
    <property type="component" value="Unassembled WGS sequence"/>
</dbReference>
<dbReference type="GO" id="GO:0005576">
    <property type="term" value="C:extracellular region"/>
    <property type="evidence" value="ECO:0007669"/>
    <property type="project" value="UniProtKB-SubCell"/>
</dbReference>
<dbReference type="GO" id="GO:0004567">
    <property type="term" value="F:beta-mannosidase activity"/>
    <property type="evidence" value="ECO:0007669"/>
    <property type="project" value="UniProtKB-EC"/>
</dbReference>
<dbReference type="GO" id="GO:0006516">
    <property type="term" value="P:glycoprotein catabolic process"/>
    <property type="evidence" value="ECO:0007669"/>
    <property type="project" value="TreeGrafter"/>
</dbReference>
<dbReference type="GO" id="GO:0000272">
    <property type="term" value="P:polysaccharide catabolic process"/>
    <property type="evidence" value="ECO:0007669"/>
    <property type="project" value="UniProtKB-KW"/>
</dbReference>
<dbReference type="FunFam" id="2.60.120.260:FF:000314">
    <property type="entry name" value="Beta-mannosidase A"/>
    <property type="match status" value="1"/>
</dbReference>
<dbReference type="FunFam" id="2.60.40.10:FF:001511">
    <property type="entry name" value="Beta-mannosidase A"/>
    <property type="match status" value="1"/>
</dbReference>
<dbReference type="FunFam" id="2.60.40.10:FF:002310">
    <property type="entry name" value="Beta-mannosidase A"/>
    <property type="match status" value="1"/>
</dbReference>
<dbReference type="FunFam" id="3.20.20.80:FF:000084">
    <property type="entry name" value="Beta-mannosidase A"/>
    <property type="match status" value="1"/>
</dbReference>
<dbReference type="Gene3D" id="2.60.120.260">
    <property type="entry name" value="Galactose-binding domain-like"/>
    <property type="match status" value="1"/>
</dbReference>
<dbReference type="Gene3D" id="3.20.20.80">
    <property type="entry name" value="Glycosidases"/>
    <property type="match status" value="1"/>
</dbReference>
<dbReference type="Gene3D" id="2.60.40.10">
    <property type="entry name" value="Immunoglobulins"/>
    <property type="match status" value="3"/>
</dbReference>
<dbReference type="InterPro" id="IPR036156">
    <property type="entry name" value="Beta-gal/glucu_dom_sf"/>
</dbReference>
<dbReference type="InterPro" id="IPR054593">
    <property type="entry name" value="Beta-mannosidase-like_N2"/>
</dbReference>
<dbReference type="InterPro" id="IPR050887">
    <property type="entry name" value="Beta-mannosidase_GH2"/>
</dbReference>
<dbReference type="InterPro" id="IPR041625">
    <property type="entry name" value="Beta-mannosidase_Ig"/>
</dbReference>
<dbReference type="InterPro" id="IPR008979">
    <property type="entry name" value="Galactose-bd-like_sf"/>
</dbReference>
<dbReference type="InterPro" id="IPR006102">
    <property type="entry name" value="Glyco_hydro_2_Ig-like"/>
</dbReference>
<dbReference type="InterPro" id="IPR017853">
    <property type="entry name" value="Glycoside_hydrolase_SF"/>
</dbReference>
<dbReference type="InterPro" id="IPR013783">
    <property type="entry name" value="Ig-like_fold"/>
</dbReference>
<dbReference type="InterPro" id="IPR041447">
    <property type="entry name" value="Mannosidase_ig"/>
</dbReference>
<dbReference type="PANTHER" id="PTHR43730">
    <property type="entry name" value="BETA-MANNOSIDASE"/>
    <property type="match status" value="1"/>
</dbReference>
<dbReference type="PANTHER" id="PTHR43730:SF5">
    <property type="entry name" value="BETA-MANNOSIDASE A"/>
    <property type="match status" value="1"/>
</dbReference>
<dbReference type="Pfam" id="PF00703">
    <property type="entry name" value="Glyco_hydro_2"/>
    <property type="match status" value="1"/>
</dbReference>
<dbReference type="Pfam" id="PF22666">
    <property type="entry name" value="Glyco_hydro_2_N2"/>
    <property type="match status" value="1"/>
</dbReference>
<dbReference type="Pfam" id="PF17753">
    <property type="entry name" value="Ig_mannosidase"/>
    <property type="match status" value="1"/>
</dbReference>
<dbReference type="Pfam" id="PF17786">
    <property type="entry name" value="Mannosidase_ig"/>
    <property type="match status" value="1"/>
</dbReference>
<dbReference type="SUPFAM" id="SSF51445">
    <property type="entry name" value="(Trans)glycosidases"/>
    <property type="match status" value="1"/>
</dbReference>
<dbReference type="SUPFAM" id="SSF49303">
    <property type="entry name" value="beta-Galactosidase/glucuronidase domain"/>
    <property type="match status" value="2"/>
</dbReference>
<dbReference type="SUPFAM" id="SSF49785">
    <property type="entry name" value="Galactose-binding domain-like"/>
    <property type="match status" value="1"/>
</dbReference>
<proteinExistence type="inferred from homology"/>
<feature type="signal peptide" evidence="2">
    <location>
        <begin position="1"/>
        <end position="21"/>
    </location>
</feature>
<feature type="chain" id="PRO_0000394644" description="Beta-mannosidase A">
    <location>
        <begin position="22"/>
        <end position="926"/>
    </location>
</feature>
<feature type="active site" description="Proton donor" evidence="1">
    <location>
        <position position="474"/>
    </location>
</feature>
<feature type="glycosylation site" description="N-linked (GlcNAc...) asparagine" evidence="2">
    <location>
        <position position="40"/>
    </location>
</feature>
<feature type="glycosylation site" description="N-linked (GlcNAc...) asparagine" evidence="2">
    <location>
        <position position="242"/>
    </location>
</feature>
<feature type="glycosylation site" description="N-linked (GlcNAc...) asparagine" evidence="2">
    <location>
        <position position="277"/>
    </location>
</feature>
<feature type="glycosylation site" description="N-linked (GlcNAc...) asparagine" evidence="2">
    <location>
        <position position="311"/>
    </location>
</feature>
<feature type="glycosylation site" description="N-linked (GlcNAc...) asparagine" evidence="2">
    <location>
        <position position="342"/>
    </location>
</feature>
<feature type="glycosylation site" description="N-linked (GlcNAc...) asparagine" evidence="2">
    <location>
        <position position="532"/>
    </location>
</feature>
<feature type="glycosylation site" description="N-linked (GlcNAc...) asparagine" evidence="2">
    <location>
        <position position="603"/>
    </location>
</feature>
<feature type="glycosylation site" description="N-linked (GlcNAc...) asparagine" evidence="2">
    <location>
        <position position="626"/>
    </location>
</feature>
<feature type="glycosylation site" description="N-linked (GlcNAc...) asparagine" evidence="2">
    <location>
        <position position="653"/>
    </location>
</feature>
<feature type="glycosylation site" description="N-linked (GlcNAc...) asparagine" evidence="2">
    <location>
        <position position="733"/>
    </location>
</feature>
<feature type="glycosylation site" description="N-linked (GlcNAc...) asparagine" evidence="2">
    <location>
        <position position="756"/>
    </location>
</feature>
<feature type="glycosylation site" description="N-linked (GlcNAc...) asparagine" evidence="2">
    <location>
        <position position="785"/>
    </location>
</feature>
<feature type="glycosylation site" description="N-linked (GlcNAc...) asparagine" evidence="2">
    <location>
        <position position="793"/>
    </location>
</feature>
<feature type="glycosylation site" description="N-linked (GlcNAc...) asparagine" evidence="2">
    <location>
        <position position="819"/>
    </location>
</feature>
<feature type="glycosylation site" description="N-linked (GlcNAc...) asparagine" evidence="2">
    <location>
        <position position="905"/>
    </location>
</feature>
<organism>
    <name type="scientific">Aspergillus fumigatus (strain CBS 144.89 / FGSC A1163 / CEA10)</name>
    <name type="common">Neosartorya fumigata</name>
    <dbReference type="NCBI Taxonomy" id="451804"/>
    <lineage>
        <taxon>Eukaryota</taxon>
        <taxon>Fungi</taxon>
        <taxon>Dikarya</taxon>
        <taxon>Ascomycota</taxon>
        <taxon>Pezizomycotina</taxon>
        <taxon>Eurotiomycetes</taxon>
        <taxon>Eurotiomycetidae</taxon>
        <taxon>Eurotiales</taxon>
        <taxon>Aspergillaceae</taxon>
        <taxon>Aspergillus</taxon>
        <taxon>Aspergillus subgen. Fumigati</taxon>
    </lineage>
</organism>
<gene>
    <name type="primary">mndA</name>
    <name type="ORF">AFUB_074800</name>
</gene>
<accession>B0Y7S2</accession>
<keyword id="KW-0119">Carbohydrate metabolism</keyword>
<keyword id="KW-0325">Glycoprotein</keyword>
<keyword id="KW-0326">Glycosidase</keyword>
<keyword id="KW-0378">Hydrolase</keyword>
<keyword id="KW-0624">Polysaccharide degradation</keyword>
<keyword id="KW-0964">Secreted</keyword>
<keyword id="KW-0732">Signal</keyword>
<sequence>MHVKAETVLALLTPAPPSVVGQHVVDLSGDGWTLSSTALNRTVPGHLPSQVHLDLFEAGVIDIMASMILTFVGLRMPIGRIPATRLKAYFESTWLVFDGLDTFATITFCDQHVGSTDNQFRQHHFDVSQILKECKQDPVLRINFGSAPNIANTIAKSPDAEEWPPGVQITNEYPNRWYIRKEQSDFGWDWGPAFAPVGPWKPSYIVQNSHAELYVLNTDIDIYRQGQINYLPPDQSQPWIVNASIDFLGPVPCKPSMSIEIKDAATGSVLSSGLLQNVTVSGKSITGTTTIDGDAPKLWWPSGMGKQNLYNVTITVQNDMKKSLAKVTKRTGFRTIFLNQRNITDDQLAQGIAPGANWHFEINGYEFYAKGSNIIPPDAFWPRVTQARMARLFDAVTAGNQNMLRVWASGAYLHDFIYDLADEKGILLWSEFQFSDALYPVNDAFLENVAAEVVYNVRRVNHHPSLALWAGGNEIESLMLPMARRADPTGYSKYIGEYEKLYISLILPLVYENTRSITYSPSSTTEGYLYVNLSAPVPMAERYSNTTPGSYYGDTDYYNYDTSVSFDYNHYPVGRFANEFGFHSMPSLQTWQQAVDPEDLQFNSSVVVLRNHHYTAGGLFTDNFKNSSKGMGEMTMGVEAYYPIPSKSDSVANFSAWCHATQLFQADLYKSQIQFYRRGSGMPERQLGSLYWQLEDIWQAPTWAGIEYDGRWKVLHYVARDIYQPIIVSPFWNYTTGRLEVYVTSDLWEPAQGTVNLTWVDLSGKSIANNAGTPETVSFTVGALNTTNIYTTNISELSLPDLKDSILILSLSGEGRLPNASSKKAFVHQNHFTPVFPKDLSLKDPKLEVSYSPESRKFTVQATGGVSLYTWLDYPAGAVGYFEANAFVLLPGVPKEVSFVAQEGNVTDDWLQRVTVQSLWDQKVRD</sequence>
<comment type="function">
    <text evidence="1">Exoglycosidase that cleaves the single beta-linked mannose residue from the non-reducing end of beta-mannosidic oligosaccharides of various complexity and length. Involved in the degradation of polymeric mannan and galactomannan (By similarity).</text>
</comment>
<comment type="catalytic activity">
    <reaction>
        <text>Hydrolysis of terminal, non-reducing beta-D-mannose residues in beta-D-mannosides.</text>
        <dbReference type="EC" id="3.2.1.25"/>
    </reaction>
</comment>
<comment type="pathway">
    <text>Glycan metabolism; N-glycan degradation.</text>
</comment>
<comment type="subunit">
    <text evidence="1">Homodimer.</text>
</comment>
<comment type="subcellular location">
    <subcellularLocation>
        <location evidence="1">Secreted</location>
    </subcellularLocation>
</comment>
<comment type="similarity">
    <text evidence="3">Belongs to the glycosyl hydrolase 2 family. Beta-mannosidase A subfamily.</text>
</comment>
<evidence type="ECO:0000250" key="1"/>
<evidence type="ECO:0000255" key="2"/>
<evidence type="ECO:0000305" key="3"/>
<name>MANBA_ASPFC</name>